<protein>
    <recommendedName>
        <fullName>Putative defensin-like protein 252</fullName>
    </recommendedName>
    <alternativeName>
        <fullName>Putative S locus cysteine-rich-like protein 13</fullName>
        <shortName>Protein SCRL13</shortName>
        <shortName>SCR-like protein 13</shortName>
    </alternativeName>
</protein>
<keyword id="KW-0929">Antimicrobial</keyword>
<keyword id="KW-1015">Disulfide bond</keyword>
<keyword id="KW-0295">Fungicide</keyword>
<keyword id="KW-0611">Plant defense</keyword>
<keyword id="KW-1185">Reference proteome</keyword>
<keyword id="KW-0964">Secreted</keyword>
<keyword id="KW-0732">Signal</keyword>
<accession>P82632</accession>
<sequence>MRCVTSFVVLCILMFLVVNNVKVDVKAQRRKPVCKLTGVLNPGKCPTAIHDASNLCSRKLASPNMTFKRCDCQNTEWRGKDHYQCTCYIKLPCNQ</sequence>
<name>DF252_ARATH</name>
<reference evidence="3" key="1">
    <citation type="journal article" date="2000" name="DNA Res.">
        <title>Structural analysis of Arabidopsis thaliana chromosome 3. II. Sequence features of the 4,251,695 bp regions covered by 90 P1, TAC and BAC clones.</title>
        <authorList>
            <person name="Kaneko T."/>
            <person name="Katoh T."/>
            <person name="Sato S."/>
            <person name="Nakamura Y."/>
            <person name="Asamizu E."/>
            <person name="Tabata S."/>
        </authorList>
    </citation>
    <scope>NUCLEOTIDE SEQUENCE [LARGE SCALE GENOMIC DNA]</scope>
    <source>
        <strain>cv. Columbia</strain>
    </source>
</reference>
<reference key="2">
    <citation type="journal article" date="2017" name="Plant J.">
        <title>Araport11: a complete reannotation of the Arabidopsis thaliana reference genome.</title>
        <authorList>
            <person name="Cheng C.Y."/>
            <person name="Krishnakumar V."/>
            <person name="Chan A.P."/>
            <person name="Thibaud-Nissen F."/>
            <person name="Schobel S."/>
            <person name="Town C.D."/>
        </authorList>
    </citation>
    <scope>GENOME REANNOTATION</scope>
    <source>
        <strain>cv. Columbia</strain>
    </source>
</reference>
<reference evidence="3" key="3">
    <citation type="journal article" date="2001" name="Plant Mol. Biol.">
        <title>Two large Arabidopsis thaliana gene families are homologous to the Brassica gene superfamily that encodes pollen coat proteins and the male component of the self-incompatibility response.</title>
        <authorList>
            <person name="Vanoosthuyse V."/>
            <person name="Miege C."/>
            <person name="Dumas C."/>
            <person name="Cock J.M."/>
        </authorList>
    </citation>
    <scope>IDENTIFICATION</scope>
</reference>
<reference key="4">
    <citation type="journal article" date="2005" name="Plant Physiol.">
        <title>Genome organization of more than 300 defensin-like genes in Arabidopsis.</title>
        <authorList>
            <person name="Silverstein K.A.T."/>
            <person name="Graham M.A."/>
            <person name="Paape T.D."/>
            <person name="VandenBosch K.A."/>
        </authorList>
    </citation>
    <scope>GENE FAMILY</scope>
</reference>
<proteinExistence type="inferred from homology"/>
<organism evidence="3">
    <name type="scientific">Arabidopsis thaliana</name>
    <name type="common">Mouse-ear cress</name>
    <dbReference type="NCBI Taxonomy" id="3702"/>
    <lineage>
        <taxon>Eukaryota</taxon>
        <taxon>Viridiplantae</taxon>
        <taxon>Streptophyta</taxon>
        <taxon>Embryophyta</taxon>
        <taxon>Tracheophyta</taxon>
        <taxon>Spermatophyta</taxon>
        <taxon>Magnoliopsida</taxon>
        <taxon>eudicotyledons</taxon>
        <taxon>Gunneridae</taxon>
        <taxon>Pentapetalae</taxon>
        <taxon>rosids</taxon>
        <taxon>malvids</taxon>
        <taxon>Brassicales</taxon>
        <taxon>Brassicaceae</taxon>
        <taxon>Camelineae</taxon>
        <taxon>Arabidopsis</taxon>
    </lineage>
</organism>
<comment type="subcellular location">
    <subcellularLocation>
        <location evidence="1">Secreted</location>
    </subcellularLocation>
</comment>
<comment type="similarity">
    <text evidence="3">Belongs to the DEFL family.</text>
</comment>
<dbReference type="EMBL" id="AP000377">
    <property type="status" value="NOT_ANNOTATED_CDS"/>
    <property type="molecule type" value="Genomic_DNA"/>
</dbReference>
<dbReference type="EMBL" id="CP002686">
    <property type="protein sequence ID" value="AEE76805.1"/>
    <property type="molecule type" value="Genomic_DNA"/>
</dbReference>
<dbReference type="RefSeq" id="NP_001030751.1">
    <property type="nucleotide sequence ID" value="NM_001035674.1"/>
</dbReference>
<dbReference type="BioGRID" id="529270">
    <property type="interactions" value="1"/>
</dbReference>
<dbReference type="iPTMnet" id="P82632"/>
<dbReference type="PaxDb" id="3702-AT3G23715.1"/>
<dbReference type="EnsemblPlants" id="AT3G23715.1">
    <property type="protein sequence ID" value="AT3G23715.1"/>
    <property type="gene ID" value="AT3G23715"/>
</dbReference>
<dbReference type="GeneID" id="3768909"/>
<dbReference type="Gramene" id="AT3G23715.1">
    <property type="protein sequence ID" value="AT3G23715.1"/>
    <property type="gene ID" value="AT3G23715"/>
</dbReference>
<dbReference type="KEGG" id="ath:AT3G23715"/>
<dbReference type="Araport" id="AT3G23715"/>
<dbReference type="TAIR" id="AT3G23715">
    <property type="gene designation" value="SCRL13"/>
</dbReference>
<dbReference type="HOGENOM" id="CLU_174283_1_0_1"/>
<dbReference type="InParanoid" id="P82632"/>
<dbReference type="OMA" id="HYQCTCY"/>
<dbReference type="OrthoDB" id="1020805at2759"/>
<dbReference type="PhylomeDB" id="P82632"/>
<dbReference type="PRO" id="PR:P82632"/>
<dbReference type="Proteomes" id="UP000006548">
    <property type="component" value="Chromosome 3"/>
</dbReference>
<dbReference type="ExpressionAtlas" id="P82632">
    <property type="expression patterns" value="differential"/>
</dbReference>
<dbReference type="GO" id="GO:0005576">
    <property type="term" value="C:extracellular region"/>
    <property type="evidence" value="ECO:0007669"/>
    <property type="project" value="UniProtKB-SubCell"/>
</dbReference>
<dbReference type="GO" id="GO:0050832">
    <property type="term" value="P:defense response to fungus"/>
    <property type="evidence" value="ECO:0007669"/>
    <property type="project" value="UniProtKB-KW"/>
</dbReference>
<dbReference type="GO" id="GO:0031640">
    <property type="term" value="P:killing of cells of another organism"/>
    <property type="evidence" value="ECO:0007669"/>
    <property type="project" value="UniProtKB-KW"/>
</dbReference>
<dbReference type="GO" id="GO:0007165">
    <property type="term" value="P:signal transduction"/>
    <property type="evidence" value="ECO:0007669"/>
    <property type="project" value="InterPro"/>
</dbReference>
<dbReference type="InterPro" id="IPR010682">
    <property type="entry name" value="SCRL"/>
</dbReference>
<dbReference type="PANTHER" id="PTHR34450:SF6">
    <property type="entry name" value="DEFENSIN-LIKE PROTEIN 241-RELATED"/>
    <property type="match status" value="1"/>
</dbReference>
<dbReference type="PANTHER" id="PTHR34450">
    <property type="entry name" value="DEFENSIN-LIKE PROTEIN 245-RELATED"/>
    <property type="match status" value="1"/>
</dbReference>
<feature type="signal peptide" evidence="2">
    <location>
        <begin position="1"/>
        <end position="27"/>
    </location>
</feature>
<feature type="chain" id="PRO_0000031939" description="Putative defensin-like protein 252">
    <location>
        <begin position="28"/>
        <end position="95"/>
    </location>
</feature>
<feature type="disulfide bond" evidence="1">
    <location>
        <begin position="34"/>
        <end position="93"/>
    </location>
</feature>
<feature type="disulfide bond" evidence="1">
    <location>
        <begin position="45"/>
        <end position="72"/>
    </location>
</feature>
<feature type="disulfide bond" evidence="1">
    <location>
        <begin position="56"/>
        <end position="85"/>
    </location>
</feature>
<feature type="disulfide bond" evidence="1">
    <location>
        <begin position="70"/>
        <end position="87"/>
    </location>
</feature>
<evidence type="ECO:0000250" key="1"/>
<evidence type="ECO:0000255" key="2"/>
<evidence type="ECO:0000305" key="3"/>
<gene>
    <name type="primary">SCRL13</name>
    <name type="ordered locus">At3g23715</name>
    <name type="ORF">MYM9</name>
</gene>